<name>DTDA_METM7</name>
<evidence type="ECO:0000255" key="1">
    <source>
        <dbReference type="HAMAP-Rule" id="MF_00562"/>
    </source>
</evidence>
<evidence type="ECO:0000256" key="2">
    <source>
        <dbReference type="SAM" id="MobiDB-lite"/>
    </source>
</evidence>
<sequence length="254" mass="29221">MDYLFISSKTDPASQNIKKHVQNYGYNVFELEKKSTQSNFSDFPDSEMYIFLSKHASESKKPTLTVHTPGNLTEDNSHGGNPEEISPCNPVFNTLMLQNINKYNEMEEYKELGFEVSFEVLHHGPTDLKTPSAFVEIGSSEEQWQIDDAAEIITNSLIDTLNSIQNSEYEEKEKIIGIGGGHYSPKFTKLALREEYYVGYLTPKHAKLSENILNQLISKQEFDFVGIDWKGLYGEDKRKYVEFFDENDISWQRV</sequence>
<proteinExistence type="inferred from homology"/>
<feature type="chain" id="PRO_1000024708" description="D-aminoacyl-tRNA deacylase">
    <location>
        <begin position="1"/>
        <end position="254"/>
    </location>
</feature>
<feature type="region of interest" description="Disordered" evidence="2">
    <location>
        <begin position="61"/>
        <end position="83"/>
    </location>
</feature>
<feature type="compositionally biased region" description="Polar residues" evidence="2">
    <location>
        <begin position="65"/>
        <end position="74"/>
    </location>
</feature>
<accession>A6VFS5</accession>
<comment type="function">
    <text evidence="1">D-aminoacyl-tRNA deacylase with broad substrate specificity. By recycling D-aminoacyl-tRNA to D-amino acids and free tRNA molecules, this enzyme counteracts the toxicity associated with the formation of D-aminoacyl-tRNA entities in vivo.</text>
</comment>
<comment type="catalytic activity">
    <reaction evidence="1">
        <text>a D-aminoacyl-tRNA + H2O = a tRNA + a D-alpha-amino acid + H(+)</text>
        <dbReference type="Rhea" id="RHEA:13953"/>
        <dbReference type="Rhea" id="RHEA-COMP:10123"/>
        <dbReference type="Rhea" id="RHEA-COMP:10124"/>
        <dbReference type="ChEBI" id="CHEBI:15377"/>
        <dbReference type="ChEBI" id="CHEBI:15378"/>
        <dbReference type="ChEBI" id="CHEBI:59871"/>
        <dbReference type="ChEBI" id="CHEBI:78442"/>
        <dbReference type="ChEBI" id="CHEBI:79333"/>
        <dbReference type="EC" id="3.1.1.96"/>
    </reaction>
</comment>
<comment type="catalytic activity">
    <reaction evidence="1">
        <text>glycyl-tRNA(Ala) + H2O = tRNA(Ala) + glycine + H(+)</text>
        <dbReference type="Rhea" id="RHEA:53744"/>
        <dbReference type="Rhea" id="RHEA-COMP:9657"/>
        <dbReference type="Rhea" id="RHEA-COMP:13640"/>
        <dbReference type="ChEBI" id="CHEBI:15377"/>
        <dbReference type="ChEBI" id="CHEBI:15378"/>
        <dbReference type="ChEBI" id="CHEBI:57305"/>
        <dbReference type="ChEBI" id="CHEBI:78442"/>
        <dbReference type="ChEBI" id="CHEBI:78522"/>
        <dbReference type="EC" id="3.1.1.96"/>
    </reaction>
</comment>
<comment type="cofactor">
    <cofactor evidence="1">
        <name>Zn(2+)</name>
        <dbReference type="ChEBI" id="CHEBI:29105"/>
    </cofactor>
    <text evidence="1">Binds 2 Zn(2+) ions per subunit.</text>
</comment>
<comment type="subunit">
    <text evidence="1">Monomer.</text>
</comment>
<comment type="similarity">
    <text evidence="1">Belongs to the DtdA deacylase family.</text>
</comment>
<gene>
    <name evidence="1" type="primary">dtdA</name>
    <name type="ordered locus">MmarC7_0231</name>
</gene>
<protein>
    <recommendedName>
        <fullName evidence="1">D-aminoacyl-tRNA deacylase</fullName>
        <ecNumber evidence="1">3.1.1.96</ecNumber>
    </recommendedName>
    <alternativeName>
        <fullName>D-tyrosyl-tRNA(Tyr) deacylase</fullName>
    </alternativeName>
</protein>
<organism>
    <name type="scientific">Methanococcus maripaludis (strain C7 / ATCC BAA-1331)</name>
    <dbReference type="NCBI Taxonomy" id="426368"/>
    <lineage>
        <taxon>Archaea</taxon>
        <taxon>Methanobacteriati</taxon>
        <taxon>Methanobacteriota</taxon>
        <taxon>Methanomada group</taxon>
        <taxon>Methanococci</taxon>
        <taxon>Methanococcales</taxon>
        <taxon>Methanococcaceae</taxon>
        <taxon>Methanococcus</taxon>
    </lineage>
</organism>
<reference key="1">
    <citation type="submission" date="2007-06" db="EMBL/GenBank/DDBJ databases">
        <title>Complete sequence of Methanococcus maripaludis C7.</title>
        <authorList>
            <consortium name="US DOE Joint Genome Institute"/>
            <person name="Copeland A."/>
            <person name="Lucas S."/>
            <person name="Lapidus A."/>
            <person name="Barry K."/>
            <person name="Glavina del Rio T."/>
            <person name="Dalin E."/>
            <person name="Tice H."/>
            <person name="Pitluck S."/>
            <person name="Clum A."/>
            <person name="Schmutz J."/>
            <person name="Larimer F."/>
            <person name="Land M."/>
            <person name="Hauser L."/>
            <person name="Kyrpides N."/>
            <person name="Anderson I."/>
            <person name="Sieprawska-Lupa M."/>
            <person name="Whitman W.B."/>
            <person name="Richardson P."/>
        </authorList>
    </citation>
    <scope>NUCLEOTIDE SEQUENCE [LARGE SCALE GENOMIC DNA]</scope>
    <source>
        <strain>C7 / ATCC BAA-1331</strain>
    </source>
</reference>
<dbReference type="EC" id="3.1.1.96" evidence="1"/>
<dbReference type="EMBL" id="CP000745">
    <property type="protein sequence ID" value="ABR65301.1"/>
    <property type="molecule type" value="Genomic_DNA"/>
</dbReference>
<dbReference type="SMR" id="A6VFS5"/>
<dbReference type="STRING" id="426368.MmarC7_0231"/>
<dbReference type="KEGG" id="mmz:MmarC7_0231"/>
<dbReference type="eggNOG" id="arCOG01616">
    <property type="taxonomic scope" value="Archaea"/>
</dbReference>
<dbReference type="HOGENOM" id="CLU_056464_1_0_2"/>
<dbReference type="OrthoDB" id="9863at2157"/>
<dbReference type="GO" id="GO:0051499">
    <property type="term" value="F:D-aminoacyl-tRNA deacylase activity"/>
    <property type="evidence" value="ECO:0007669"/>
    <property type="project" value="UniProtKB-UniRule"/>
</dbReference>
<dbReference type="GO" id="GO:0008270">
    <property type="term" value="F:zinc ion binding"/>
    <property type="evidence" value="ECO:0007669"/>
    <property type="project" value="UniProtKB-UniRule"/>
</dbReference>
<dbReference type="GO" id="GO:0019478">
    <property type="term" value="P:D-amino acid catabolic process"/>
    <property type="evidence" value="ECO:0007669"/>
    <property type="project" value="UniProtKB-UniRule"/>
</dbReference>
<dbReference type="Gene3D" id="3.40.50.10700">
    <property type="entry name" value="AF0625-like"/>
    <property type="match status" value="1"/>
</dbReference>
<dbReference type="Gene3D" id="3.40.630.50">
    <property type="entry name" value="AF0625-like"/>
    <property type="match status" value="1"/>
</dbReference>
<dbReference type="HAMAP" id="MF_00562">
    <property type="entry name" value="Deacylase_DtdA"/>
    <property type="match status" value="1"/>
</dbReference>
<dbReference type="InterPro" id="IPR018033">
    <property type="entry name" value="Deacylase_DtdA_archaea"/>
</dbReference>
<dbReference type="InterPro" id="IPR007508">
    <property type="entry name" value="DtdA"/>
</dbReference>
<dbReference type="NCBIfam" id="NF003071">
    <property type="entry name" value="PRK03995.1-3"/>
    <property type="match status" value="1"/>
</dbReference>
<dbReference type="PANTHER" id="PTHR34667">
    <property type="entry name" value="D-AMINOACYL-TRNA DEACYLASE"/>
    <property type="match status" value="1"/>
</dbReference>
<dbReference type="PANTHER" id="PTHR34667:SF1">
    <property type="entry name" value="D-AMINOACYL-TRNA DEACYLASE"/>
    <property type="match status" value="1"/>
</dbReference>
<dbReference type="Pfam" id="PF04414">
    <property type="entry name" value="tRNA_deacylase"/>
    <property type="match status" value="1"/>
</dbReference>
<dbReference type="PIRSF" id="PIRSF016210">
    <property type="entry name" value="UCP016210"/>
    <property type="match status" value="1"/>
</dbReference>
<dbReference type="SUPFAM" id="SSF142535">
    <property type="entry name" value="AF0625-like"/>
    <property type="match status" value="1"/>
</dbReference>
<keyword id="KW-0378">Hydrolase</keyword>
<keyword id="KW-0479">Metal-binding</keyword>
<keyword id="KW-0862">Zinc</keyword>